<organism>
    <name type="scientific">Sputnik virophage</name>
    <dbReference type="NCBI Taxonomy" id="543939"/>
    <lineage>
        <taxon>Viruses</taxon>
        <taxon>Varidnaviria</taxon>
        <taxon>Bamfordvirae</taxon>
        <taxon>Preplasmiviricota</taxon>
        <taxon>Maveriviricetes</taxon>
        <taxon>Priklausovirales</taxon>
        <taxon>Lavidaviridae</taxon>
        <taxon>Sputnikvirus</taxon>
        <taxon>Mimivirus-dependent virus Sputnik</taxon>
    </lineage>
</organism>
<name>V8_SPTNK</name>
<sequence length="184" mass="19765">MSVSTLFQQNNNNIYNKSNTLTNTPSNPTGNTNTLWSNSGFNPPHLMYGASDVTAAINNIAFETGTFNLQLSGPWASPISHAVSYTKINNLVNLTIPTYQAQATTLASISSIVGALPTNLRPVNNPEIDFEIFVLDNGTRTTNPGLITLLSNGQILIYKDNNLGQFTVGSGGSGFNPFSITYMI</sequence>
<accession>B4YNE8</accession>
<comment type="subcellular location">
    <subcellularLocation>
        <location>Virion</location>
    </subcellularLocation>
</comment>
<comment type="similarity">
    <text evidence="2">Belongs to the sputnik virus V6 family.</text>
</comment>
<proteinExistence type="evidence at protein level"/>
<protein>
    <recommendedName>
        <fullName>Structural protein V8</fullName>
    </recommendedName>
</protein>
<feature type="chain" id="PRO_0000369816" description="Structural protein V8">
    <location>
        <begin position="1"/>
        <end position="184"/>
    </location>
</feature>
<feature type="region of interest" description="Disordered" evidence="1">
    <location>
        <begin position="14"/>
        <end position="35"/>
    </location>
</feature>
<dbReference type="EMBL" id="EU606015">
    <property type="protein sequence ID" value="ACF16992.1"/>
    <property type="molecule type" value="Genomic_DNA"/>
</dbReference>
<dbReference type="RefSeq" id="YP_002122369.1">
    <property type="nucleotide sequence ID" value="NC_011132.1"/>
</dbReference>
<dbReference type="SMR" id="B4YNE8"/>
<dbReference type="GeneID" id="6760348"/>
<dbReference type="KEGG" id="vg:6760348"/>
<dbReference type="OrthoDB" id="32361at10239"/>
<dbReference type="Proteomes" id="UP000001863">
    <property type="component" value="Segment"/>
</dbReference>
<dbReference type="GO" id="GO:0044423">
    <property type="term" value="C:virion component"/>
    <property type="evidence" value="ECO:0007669"/>
    <property type="project" value="UniProtKB-KW"/>
</dbReference>
<reference key="1">
    <citation type="journal article" date="2008" name="Nature">
        <title>The virophage as a unique parasite of the giant mimivirus.</title>
        <authorList>
            <person name="La Scola B."/>
            <person name="Desnues C."/>
            <person name="Pagnier I."/>
            <person name="Robert C."/>
            <person name="Barrassi L."/>
            <person name="Fournous G."/>
            <person name="Merchat M."/>
            <person name="Suzan-Monti M."/>
            <person name="Forterre P."/>
            <person name="Koonin E."/>
            <person name="Raoult D."/>
        </authorList>
    </citation>
    <scope>NUCLEOTIDE SEQUENCE [GENOMIC DNA]</scope>
    <scope>IDENTIFICATION BY MASS SPECTROMETRY</scope>
</reference>
<organismHost>
    <name type="scientific">Acanthamoeba polyphaga</name>
    <name type="common">Amoeba</name>
    <dbReference type="NCBI Taxonomy" id="5757"/>
</organismHost>
<keyword id="KW-1185">Reference proteome</keyword>
<keyword id="KW-0946">Virion</keyword>
<evidence type="ECO:0000256" key="1">
    <source>
        <dbReference type="SAM" id="MobiDB-lite"/>
    </source>
</evidence>
<evidence type="ECO:0000305" key="2"/>